<protein>
    <recommendedName>
        <fullName>Condensin-2 complex subunit H2</fullName>
    </recommendedName>
    <alternativeName>
        <fullName>Chromosome-associated protein H2</fullName>
        <shortName>hCAP-H2</shortName>
    </alternativeName>
    <alternativeName>
        <fullName>Kleisin-beta</fullName>
    </alternativeName>
    <alternativeName>
        <fullName>Non-SMC condensin II complex subunit H2</fullName>
    </alternativeName>
</protein>
<dbReference type="EMBL" id="AL021682">
    <property type="protein sequence ID" value="CAA16670.1"/>
    <property type="status" value="ALT_FRAME"/>
    <property type="molecule type" value="mRNA"/>
</dbReference>
<dbReference type="EMBL" id="CR456604">
    <property type="protein sequence ID" value="CAG30490.1"/>
    <property type="molecule type" value="mRNA"/>
</dbReference>
<dbReference type="EMBL" id="U62317">
    <property type="protein sequence ID" value="AAB03345.1"/>
    <property type="status" value="ALT_SEQ"/>
    <property type="molecule type" value="Genomic_DNA"/>
</dbReference>
<dbReference type="EMBL" id="CH471138">
    <property type="protein sequence ID" value="EAW73554.1"/>
    <property type="molecule type" value="Genomic_DNA"/>
</dbReference>
<dbReference type="EMBL" id="CH471138">
    <property type="protein sequence ID" value="EAW73556.1"/>
    <property type="molecule type" value="Genomic_DNA"/>
</dbReference>
<dbReference type="EMBL" id="CH471138">
    <property type="protein sequence ID" value="EAW73552.1"/>
    <property type="status" value="ALT_SEQ"/>
    <property type="molecule type" value="Genomic_DNA"/>
</dbReference>
<dbReference type="EMBL" id="BC000473">
    <property type="protein sequence ID" value="AAH00473.1"/>
    <property type="status" value="ALT_INIT"/>
    <property type="molecule type" value="mRNA"/>
</dbReference>
<dbReference type="EMBL" id="BC001509">
    <property type="protein sequence ID" value="AAH01509.1"/>
    <property type="status" value="ALT_INIT"/>
    <property type="molecule type" value="mRNA"/>
</dbReference>
<dbReference type="EMBL" id="BC001833">
    <property type="protein sequence ID" value="AAH01833.1"/>
    <property type="status" value="ALT_INIT"/>
    <property type="molecule type" value="mRNA"/>
</dbReference>
<dbReference type="EMBL" id="BC001937">
    <property type="protein sequence ID" value="AAH01937.1"/>
    <property type="status" value="ALT_INIT"/>
    <property type="molecule type" value="mRNA"/>
</dbReference>
<dbReference type="EMBL" id="BC009441">
    <property type="protein sequence ID" value="AAH09441.1"/>
    <property type="status" value="ALT_INIT"/>
    <property type="molecule type" value="mRNA"/>
</dbReference>
<dbReference type="EMBL" id="BC014939">
    <property type="protein sequence ID" value="AAH14939.2"/>
    <property type="molecule type" value="mRNA"/>
</dbReference>
<dbReference type="CCDS" id="CCDS14094.2">
    <molecule id="Q6IBW4-1"/>
</dbReference>
<dbReference type="CCDS" id="CCDS43038.1">
    <molecule id="Q6IBW4-5"/>
</dbReference>
<dbReference type="CCDS" id="CCDS54546.1">
    <molecule id="Q6IBW4-4"/>
</dbReference>
<dbReference type="RefSeq" id="NP_001171940.1">
    <molecule id="Q6IBW4-4"/>
    <property type="nucleotide sequence ID" value="NM_001185011.2"/>
</dbReference>
<dbReference type="RefSeq" id="NP_055366.3">
    <molecule id="Q6IBW4-5"/>
    <property type="nucleotide sequence ID" value="NM_014551.4"/>
</dbReference>
<dbReference type="RefSeq" id="NP_689512.2">
    <molecule id="Q6IBW4-1"/>
    <property type="nucleotide sequence ID" value="NM_152299.4"/>
</dbReference>
<dbReference type="BioGRID" id="118913">
    <property type="interactions" value="180"/>
</dbReference>
<dbReference type="ComplexPortal" id="CPX-985">
    <property type="entry name" value="Condensin II complex"/>
</dbReference>
<dbReference type="CORUM" id="Q6IBW4"/>
<dbReference type="DIP" id="DIP-43901N"/>
<dbReference type="FunCoup" id="Q6IBW4">
    <property type="interactions" value="2630"/>
</dbReference>
<dbReference type="IntAct" id="Q6IBW4">
    <property type="interactions" value="141"/>
</dbReference>
<dbReference type="MINT" id="Q6IBW4"/>
<dbReference type="STRING" id="9606.ENSP00000299821"/>
<dbReference type="GlyGen" id="Q6IBW4">
    <property type="glycosylation" value="1 site, 1 O-linked glycan (1 site)"/>
</dbReference>
<dbReference type="iPTMnet" id="Q6IBW4"/>
<dbReference type="MetOSite" id="Q6IBW4"/>
<dbReference type="PhosphoSitePlus" id="Q6IBW4"/>
<dbReference type="BioMuta" id="NCAPH2"/>
<dbReference type="DMDM" id="74709496"/>
<dbReference type="CPTAC" id="CPTAC-5922"/>
<dbReference type="jPOST" id="Q6IBW4"/>
<dbReference type="MassIVE" id="Q6IBW4"/>
<dbReference type="PaxDb" id="9606-ENSP00000299821"/>
<dbReference type="PeptideAtlas" id="Q6IBW4"/>
<dbReference type="ProteomicsDB" id="66371">
    <molecule id="Q6IBW4-1"/>
</dbReference>
<dbReference type="ProteomicsDB" id="66372">
    <molecule id="Q6IBW4-2"/>
</dbReference>
<dbReference type="ProteomicsDB" id="66373">
    <molecule id="Q6IBW4-4"/>
</dbReference>
<dbReference type="ProteomicsDB" id="66374">
    <molecule id="Q6IBW4-5"/>
</dbReference>
<dbReference type="Pumba" id="Q6IBW4"/>
<dbReference type="Antibodypedia" id="28671">
    <property type="antibodies" value="128 antibodies from 23 providers"/>
</dbReference>
<dbReference type="CPTC" id="Q6IBW4">
    <property type="antibodies" value="1 antibody"/>
</dbReference>
<dbReference type="DNASU" id="29781"/>
<dbReference type="Ensembl" id="ENST00000299821.15">
    <molecule id="Q6IBW4-4"/>
    <property type="protein sequence ID" value="ENSP00000299821.11"/>
    <property type="gene ID" value="ENSG00000025770.19"/>
</dbReference>
<dbReference type="Ensembl" id="ENST00000395698.7">
    <molecule id="Q6IBW4-5"/>
    <property type="protein sequence ID" value="ENSP00000379050.3"/>
    <property type="gene ID" value="ENSG00000025770.19"/>
</dbReference>
<dbReference type="Ensembl" id="ENST00000420993.7">
    <molecule id="Q6IBW4-1"/>
    <property type="protein sequence ID" value="ENSP00000410088.2"/>
    <property type="gene ID" value="ENSG00000025770.19"/>
</dbReference>
<dbReference type="GeneID" id="29781"/>
<dbReference type="KEGG" id="hsa:29781"/>
<dbReference type="MANE-Select" id="ENST00000420993.7">
    <property type="protein sequence ID" value="ENSP00000410088.2"/>
    <property type="RefSeq nucleotide sequence ID" value="NM_152299.4"/>
    <property type="RefSeq protein sequence ID" value="NP_689512.2"/>
</dbReference>
<dbReference type="UCSC" id="uc003blq.5">
    <molecule id="Q6IBW4-1"/>
    <property type="organism name" value="human"/>
</dbReference>
<dbReference type="AGR" id="HGNC:25071"/>
<dbReference type="CTD" id="29781"/>
<dbReference type="DisGeNET" id="29781"/>
<dbReference type="GeneCards" id="NCAPH2"/>
<dbReference type="HGNC" id="HGNC:25071">
    <property type="gene designation" value="NCAPH2"/>
</dbReference>
<dbReference type="HPA" id="ENSG00000025770">
    <property type="expression patterns" value="Low tissue specificity"/>
</dbReference>
<dbReference type="MalaCards" id="NCAPH2"/>
<dbReference type="MIM" id="611230">
    <property type="type" value="gene"/>
</dbReference>
<dbReference type="neXtProt" id="NX_Q6IBW4"/>
<dbReference type="OpenTargets" id="ENSG00000025770"/>
<dbReference type="PharmGKB" id="PA162397314"/>
<dbReference type="VEuPathDB" id="HostDB:ENSG00000025770"/>
<dbReference type="eggNOG" id="KOG2359">
    <property type="taxonomic scope" value="Eukaryota"/>
</dbReference>
<dbReference type="GeneTree" id="ENSGT00390000014443"/>
<dbReference type="HOGENOM" id="CLU_010569_0_0_1"/>
<dbReference type="InParanoid" id="Q6IBW4"/>
<dbReference type="OMA" id="FDPPEHK"/>
<dbReference type="OrthoDB" id="10038475at2759"/>
<dbReference type="PAN-GO" id="Q6IBW4">
    <property type="GO annotations" value="5 GO annotations based on evolutionary models"/>
</dbReference>
<dbReference type="PhylomeDB" id="Q6IBW4"/>
<dbReference type="TreeFam" id="TF101164"/>
<dbReference type="PathwayCommons" id="Q6IBW4"/>
<dbReference type="Reactome" id="R-HSA-2299718">
    <property type="pathway name" value="Condensation of Prophase Chromosomes"/>
</dbReference>
<dbReference type="SignaLink" id="Q6IBW4"/>
<dbReference type="SIGNOR" id="Q6IBW4"/>
<dbReference type="BioGRID-ORCS" id="29781">
    <property type="hits" value="609 hits in 1162 CRISPR screens"/>
</dbReference>
<dbReference type="CD-CODE" id="91857CE7">
    <property type="entry name" value="Nucleolus"/>
</dbReference>
<dbReference type="ChiTaRS" id="NCAPH2">
    <property type="organism name" value="human"/>
</dbReference>
<dbReference type="GeneWiki" id="NCAPH2"/>
<dbReference type="GenomeRNAi" id="29781"/>
<dbReference type="Pharos" id="Q6IBW4">
    <property type="development level" value="Tbio"/>
</dbReference>
<dbReference type="PRO" id="PR:Q6IBW4"/>
<dbReference type="Proteomes" id="UP000005640">
    <property type="component" value="Chromosome 22"/>
</dbReference>
<dbReference type="RNAct" id="Q6IBW4">
    <property type="molecule type" value="protein"/>
</dbReference>
<dbReference type="Bgee" id="ENSG00000025770">
    <property type="expression patterns" value="Expressed in cerebellar hemisphere and 188 other cell types or tissues"/>
</dbReference>
<dbReference type="ExpressionAtlas" id="Q6IBW4">
    <property type="expression patterns" value="baseline and differential"/>
</dbReference>
<dbReference type="GO" id="GO:0030054">
    <property type="term" value="C:cell junction"/>
    <property type="evidence" value="ECO:0000314"/>
    <property type="project" value="HPA"/>
</dbReference>
<dbReference type="GO" id="GO:0000794">
    <property type="term" value="C:condensed nuclear chromosome"/>
    <property type="evidence" value="ECO:0000266"/>
    <property type="project" value="ComplexPortal"/>
</dbReference>
<dbReference type="GO" id="GO:0000796">
    <property type="term" value="C:condensin complex"/>
    <property type="evidence" value="ECO:0000318"/>
    <property type="project" value="GO_Central"/>
</dbReference>
<dbReference type="GO" id="GO:0045171">
    <property type="term" value="C:intercellular bridge"/>
    <property type="evidence" value="ECO:0000314"/>
    <property type="project" value="HPA"/>
</dbReference>
<dbReference type="GO" id="GO:0016020">
    <property type="term" value="C:membrane"/>
    <property type="evidence" value="ECO:0007005"/>
    <property type="project" value="UniProtKB"/>
</dbReference>
<dbReference type="GO" id="GO:0005654">
    <property type="term" value="C:nucleoplasm"/>
    <property type="evidence" value="ECO:0000314"/>
    <property type="project" value="HPA"/>
</dbReference>
<dbReference type="GO" id="GO:0005634">
    <property type="term" value="C:nucleus"/>
    <property type="evidence" value="ECO:0000318"/>
    <property type="project" value="GO_Central"/>
</dbReference>
<dbReference type="GO" id="GO:0003682">
    <property type="term" value="F:chromatin binding"/>
    <property type="evidence" value="ECO:0000318"/>
    <property type="project" value="GO_Central"/>
</dbReference>
<dbReference type="GO" id="GO:0051309">
    <property type="term" value="P:female meiosis chromosome separation"/>
    <property type="evidence" value="ECO:0007669"/>
    <property type="project" value="Ensembl"/>
</dbReference>
<dbReference type="GO" id="GO:0010032">
    <property type="term" value="P:meiotic chromosome condensation"/>
    <property type="evidence" value="ECO:0000318"/>
    <property type="project" value="GO_Central"/>
</dbReference>
<dbReference type="GO" id="GO:0007076">
    <property type="term" value="P:mitotic chromosome condensation"/>
    <property type="evidence" value="ECO:0000250"/>
    <property type="project" value="UniProtKB"/>
</dbReference>
<dbReference type="GO" id="GO:0051306">
    <property type="term" value="P:mitotic sister chromatid separation"/>
    <property type="evidence" value="ECO:0000318"/>
    <property type="project" value="GO_Central"/>
</dbReference>
<dbReference type="GO" id="GO:1905821">
    <property type="term" value="P:positive regulation of chromosome condensation"/>
    <property type="evidence" value="ECO:0000250"/>
    <property type="project" value="ComplexPortal"/>
</dbReference>
<dbReference type="GO" id="GO:0051984">
    <property type="term" value="P:positive regulation of chromosome segregation"/>
    <property type="evidence" value="ECO:0000266"/>
    <property type="project" value="ComplexPortal"/>
</dbReference>
<dbReference type="GO" id="GO:1905820">
    <property type="term" value="P:positive regulation of chromosome separation"/>
    <property type="evidence" value="ECO:0000266"/>
    <property type="project" value="ComplexPortal"/>
</dbReference>
<dbReference type="GO" id="GO:0033077">
    <property type="term" value="P:T cell differentiation in thymus"/>
    <property type="evidence" value="ECO:0007669"/>
    <property type="project" value="Ensembl"/>
</dbReference>
<dbReference type="InterPro" id="IPR031737">
    <property type="entry name" value="CNDH2_C"/>
</dbReference>
<dbReference type="InterPro" id="IPR031719">
    <property type="entry name" value="H2_M"/>
</dbReference>
<dbReference type="InterPro" id="IPR009378">
    <property type="entry name" value="H2_N"/>
</dbReference>
<dbReference type="InterPro" id="IPR031739">
    <property type="entry name" value="Ncaph2"/>
</dbReference>
<dbReference type="PANTHER" id="PTHR14324">
    <property type="entry name" value="CONDENSIN-2 COMPLEX SUBUNIT H2"/>
    <property type="match status" value="1"/>
</dbReference>
<dbReference type="PANTHER" id="PTHR14324:SF3">
    <property type="entry name" value="CONDENSIN-2 COMPLEX SUBUNIT H2"/>
    <property type="match status" value="1"/>
</dbReference>
<dbReference type="Pfam" id="PF16858">
    <property type="entry name" value="CNDH2_C"/>
    <property type="match status" value="1"/>
</dbReference>
<dbReference type="Pfam" id="PF16869">
    <property type="entry name" value="CNDH2_M"/>
    <property type="match status" value="1"/>
</dbReference>
<dbReference type="Pfam" id="PF06278">
    <property type="entry name" value="CNDH2_N"/>
    <property type="match status" value="1"/>
</dbReference>
<accession>Q6IBW4</accession>
<accession>B7WPH1</accession>
<accession>O43788</accession>
<accession>Q13391</accession>
<accession>Q96C14</accession>
<accession>Q96GJ0</accession>
<accession>Q9BQ71</accession>
<accession>Q9BUT3</accession>
<accession>Q9BVD1</accession>
<gene>
    <name type="primary">NCAPH2</name>
    <name type="synonym">CAPH2</name>
</gene>
<name>CNDH2_HUMAN</name>
<feature type="chain" id="PRO_0000326241" description="Condensin-2 complex subunit H2">
    <location>
        <begin position="1"/>
        <end position="605"/>
    </location>
</feature>
<feature type="region of interest" description="Disordered" evidence="3">
    <location>
        <begin position="194"/>
        <end position="331"/>
    </location>
</feature>
<feature type="compositionally biased region" description="Acidic residues" evidence="3">
    <location>
        <begin position="256"/>
        <end position="266"/>
    </location>
</feature>
<feature type="modified residue" description="Phosphothreonine" evidence="11">
    <location>
        <position position="19"/>
    </location>
</feature>
<feature type="modified residue" description="Phosphoserine" evidence="11">
    <location>
        <position position="95"/>
    </location>
</feature>
<feature type="modified residue" description="Phosphoserine" evidence="11">
    <location>
        <position position="200"/>
    </location>
</feature>
<feature type="modified residue" description="Phosphoserine" evidence="10 11">
    <location>
        <position position="208"/>
    </location>
</feature>
<feature type="modified residue" description="Phosphoserine" evidence="1">
    <location>
        <position position="228"/>
    </location>
</feature>
<feature type="modified residue" description="Phosphoserine" evidence="2">
    <location>
        <position position="232"/>
    </location>
</feature>
<feature type="modified residue" description="Phosphoserine" evidence="8">
    <location>
        <position position="282"/>
    </location>
</feature>
<feature type="modified residue" description="Phosphoserine" evidence="9 11 12">
    <location>
        <position position="284"/>
    </location>
</feature>
<feature type="modified residue" description="Phosphoserine" evidence="11">
    <location>
        <position position="466"/>
    </location>
</feature>
<feature type="modified residue" description="Phosphoserine" evidence="7 8 9 11 12">
    <location>
        <position position="492"/>
    </location>
</feature>
<feature type="splice variant" id="VSP_032636" description="In isoform 2." evidence="6">
    <location>
        <begin position="167"/>
        <end position="188"/>
    </location>
</feature>
<feature type="splice variant" id="VSP_032637" description="In isoform 3." evidence="5">
    <original>SAALPRRYMLRE</original>
    <variation>VGPTWRPAEPEL</variation>
    <location>
        <begin position="288"/>
        <end position="299"/>
    </location>
</feature>
<feature type="splice variant" id="VSP_032638" description="In isoform 3." evidence="5">
    <location>
        <begin position="300"/>
        <end position="605"/>
    </location>
</feature>
<feature type="splice variant" id="VSP_032639" description="In isoform 4." evidence="5">
    <original>A</original>
    <variation>AA</variation>
    <location>
        <position position="435"/>
    </location>
</feature>
<feature type="sequence conflict" description="In Ref. 1; CAA16670." evidence="6" ref="1">
    <original>E</original>
    <variation>D</variation>
    <location>
        <position position="36"/>
    </location>
</feature>
<feature type="sequence conflict" description="In Ref. 1; CAA16670." evidence="6" ref="1">
    <original>Q</original>
    <variation>H</variation>
    <location>
        <position position="61"/>
    </location>
</feature>
<feature type="sequence conflict" description="In Ref. 1; CAA16670." evidence="6" ref="1">
    <original>S</original>
    <variation>W</variation>
    <location>
        <position position="76"/>
    </location>
</feature>
<feature type="sequence conflict" description="In Ref. 1; CAA16670." evidence="6" ref="1">
    <original>N</original>
    <variation>I</variation>
    <location>
        <position position="161"/>
    </location>
</feature>
<feature type="sequence conflict" description="In Ref. 1; CAA16670." evidence="6" ref="1">
    <original>G</original>
    <variation>R</variation>
    <location>
        <position position="190"/>
    </location>
</feature>
<feature type="sequence conflict" description="In Ref. 1; CAA16670." evidence="6" ref="1">
    <original>K</original>
    <variation>N</variation>
    <location>
        <position position="215"/>
    </location>
</feature>
<feature type="sequence conflict" description="In Ref. 1; CAA16670." evidence="6" ref="1">
    <original>G</original>
    <variation>R</variation>
    <location>
        <position position="249"/>
    </location>
</feature>
<feature type="sequence conflict" description="In Ref. 5; AAH09441." evidence="6" ref="5">
    <original>S</original>
    <variation>F</variation>
    <location>
        <position position="282"/>
    </location>
</feature>
<feature type="sequence conflict" description="In Ref. 1; CAA16670." evidence="6" ref="1">
    <original>P</original>
    <variation>L</variation>
    <location>
        <position position="316"/>
    </location>
</feature>
<feature type="sequence conflict" description="In Ref. 1; CAA16670." evidence="6" ref="1">
    <original>FD</original>
    <variation>LN</variation>
    <location>
        <begin position="323"/>
        <end position="324"/>
    </location>
</feature>
<feature type="sequence conflict" description="In Ref. 1; CAA16670." evidence="6" ref="1">
    <original>A</original>
    <variation>V</variation>
    <location>
        <position position="368"/>
    </location>
</feature>
<feature type="sequence conflict" description="In Ref. 1; CAA16670." evidence="6" ref="1">
    <original>N</original>
    <variation>K</variation>
    <location>
        <position position="474"/>
    </location>
</feature>
<feature type="sequence conflict" description="In Ref. 1; CAA16670." evidence="6" ref="1">
    <original>V</original>
    <variation>I</variation>
    <location>
        <position position="486"/>
    </location>
</feature>
<sequence>MEDVEARFAHLLQPIRDLTKNWEVDVAAQLGEYLEELDQICISFDEGKTTMNFIEAALLIQGSACVYSKKVEYLYSLVYQALDFISGKRRAKQLSSVQEDRANGVASSGVPQEAENEFLSLDDFPDSRTNVDLKNDQTPSEVLIIPLLPMALVAPDEMEKNNNPLYSRQGEVLASRKDFRMNTCVPHPRGAFMLEPEGMSPMEPAGVSPMPGTQKDTGRTEEQPMEVSVCRSPVPALGFSQEPGPSPEGPMPLGGGEDEDAEEAVELPEASAPKAALEPKESRSPQQSAALPRRYMLREREGAPEPASCVKETPDPWQSLDPFDSLESKPFKKGRPYSVPPCVEEALGQKRKRKGAAKLQDFHQWYLAAYADHADSRRLRRKGPSFADMEVLYWTHVKEQLETLRKLQRREVAEQWLRPAEEDHLEDSLEDLGAADDFLEPEEYMEPEGADPREAADLDAVPMSLSYEELVRRNVELFIATSQKFVQETELSQRIRDWEDTVQPLLQEQEQHVPFDIHTYGDQLVSRFPQLNEWCPFAELVAGQPAFEVCRSMLASLQLANDYTVEITQQPGLEMAVDTMSLRLLTHQRAHKRFQTYAAPSMAQP</sequence>
<reference key="1">
    <citation type="journal article" date="2003" name="Genome Res.">
        <title>Reevaluating human gene annotation: a second-generation analysis of chromosome 22.</title>
        <authorList>
            <person name="Collins J.E."/>
            <person name="Goward M.E."/>
            <person name="Cole C.G."/>
            <person name="Smink L.J."/>
            <person name="Huckle E.J."/>
            <person name="Knowles S."/>
            <person name="Bye J.M."/>
            <person name="Beare D.M."/>
            <person name="Dunham I."/>
        </authorList>
    </citation>
    <scope>NUCLEOTIDE SEQUENCE [LARGE SCALE MRNA] (ISOFORM 1)</scope>
    <source>
        <tissue>Placenta</tissue>
    </source>
</reference>
<reference key="2">
    <citation type="journal article" date="2004" name="Genome Biol.">
        <title>A genome annotation-driven approach to cloning the human ORFeome.</title>
        <authorList>
            <person name="Collins J.E."/>
            <person name="Wright C.L."/>
            <person name="Edwards C.A."/>
            <person name="Davis M.P."/>
            <person name="Grinham J.A."/>
            <person name="Cole C.G."/>
            <person name="Goward M.E."/>
            <person name="Aguado B."/>
            <person name="Mallya M."/>
            <person name="Mokrab Y."/>
            <person name="Huckle E.J."/>
            <person name="Beare D.M."/>
            <person name="Dunham I."/>
        </authorList>
    </citation>
    <scope>NUCLEOTIDE SEQUENCE [LARGE SCALE MRNA] (ISOFORM 1)</scope>
</reference>
<reference key="3">
    <citation type="journal article" date="1999" name="Nature">
        <title>The DNA sequence of human chromosome 22.</title>
        <authorList>
            <person name="Dunham I."/>
            <person name="Hunt A.R."/>
            <person name="Collins J.E."/>
            <person name="Bruskiewich R."/>
            <person name="Beare D.M."/>
            <person name="Clamp M."/>
            <person name="Smink L.J."/>
            <person name="Ainscough R."/>
            <person name="Almeida J.P."/>
            <person name="Babbage A.K."/>
            <person name="Bagguley C."/>
            <person name="Bailey J."/>
            <person name="Barlow K.F."/>
            <person name="Bates K.N."/>
            <person name="Beasley O.P."/>
            <person name="Bird C.P."/>
            <person name="Blakey S.E."/>
            <person name="Bridgeman A.M."/>
            <person name="Buck D."/>
            <person name="Burgess J."/>
            <person name="Burrill W.D."/>
            <person name="Burton J."/>
            <person name="Carder C."/>
            <person name="Carter N.P."/>
            <person name="Chen Y."/>
            <person name="Clark G."/>
            <person name="Clegg S.M."/>
            <person name="Cobley V.E."/>
            <person name="Cole C.G."/>
            <person name="Collier R.E."/>
            <person name="Connor R."/>
            <person name="Conroy D."/>
            <person name="Corby N.R."/>
            <person name="Coville G.J."/>
            <person name="Cox A.V."/>
            <person name="Davis J."/>
            <person name="Dawson E."/>
            <person name="Dhami P.D."/>
            <person name="Dockree C."/>
            <person name="Dodsworth S.J."/>
            <person name="Durbin R.M."/>
            <person name="Ellington A.G."/>
            <person name="Evans K.L."/>
            <person name="Fey J.M."/>
            <person name="Fleming K."/>
            <person name="French L."/>
            <person name="Garner A.A."/>
            <person name="Gilbert J.G.R."/>
            <person name="Goward M.E."/>
            <person name="Grafham D.V."/>
            <person name="Griffiths M.N.D."/>
            <person name="Hall C."/>
            <person name="Hall R.E."/>
            <person name="Hall-Tamlyn G."/>
            <person name="Heathcott R.W."/>
            <person name="Ho S."/>
            <person name="Holmes S."/>
            <person name="Hunt S.E."/>
            <person name="Jones M.C."/>
            <person name="Kershaw J."/>
            <person name="Kimberley A.M."/>
            <person name="King A."/>
            <person name="Laird G.K."/>
            <person name="Langford C.F."/>
            <person name="Leversha M.A."/>
            <person name="Lloyd C."/>
            <person name="Lloyd D.M."/>
            <person name="Martyn I.D."/>
            <person name="Mashreghi-Mohammadi M."/>
            <person name="Matthews L.H."/>
            <person name="Mccann O.T."/>
            <person name="Mcclay J."/>
            <person name="Mclaren S."/>
            <person name="McMurray A.A."/>
            <person name="Milne S.A."/>
            <person name="Mortimore B.J."/>
            <person name="Odell C.N."/>
            <person name="Pavitt R."/>
            <person name="Pearce A.V."/>
            <person name="Pearson D."/>
            <person name="Phillimore B.J.C.T."/>
            <person name="Phillips S.H."/>
            <person name="Plumb R.W."/>
            <person name="Ramsay H."/>
            <person name="Ramsey Y."/>
            <person name="Rogers L."/>
            <person name="Ross M.T."/>
            <person name="Scott C.E."/>
            <person name="Sehra H.K."/>
            <person name="Skuce C.D."/>
            <person name="Smalley S."/>
            <person name="Smith M.L."/>
            <person name="Soderlund C."/>
            <person name="Spragon L."/>
            <person name="Steward C.A."/>
            <person name="Sulston J.E."/>
            <person name="Swann R.M."/>
            <person name="Vaudin M."/>
            <person name="Wall M."/>
            <person name="Wallis J.M."/>
            <person name="Whiteley M.N."/>
            <person name="Willey D.L."/>
            <person name="Williams L."/>
            <person name="Williams S.A."/>
            <person name="Williamson H."/>
            <person name="Wilmer T.E."/>
            <person name="Wilming L."/>
            <person name="Wright C.L."/>
            <person name="Hubbard T."/>
            <person name="Bentley D.R."/>
            <person name="Beck S."/>
            <person name="Rogers J."/>
            <person name="Shimizu N."/>
            <person name="Minoshima S."/>
            <person name="Kawasaki K."/>
            <person name="Sasaki T."/>
            <person name="Asakawa S."/>
            <person name="Kudoh J."/>
            <person name="Shintani A."/>
            <person name="Shibuya K."/>
            <person name="Yoshizaki Y."/>
            <person name="Aoki N."/>
            <person name="Mitsuyama S."/>
            <person name="Roe B.A."/>
            <person name="Chen F."/>
            <person name="Chu L."/>
            <person name="Crabtree J."/>
            <person name="Deschamps S."/>
            <person name="Do A."/>
            <person name="Do T."/>
            <person name="Dorman A."/>
            <person name="Fang F."/>
            <person name="Fu Y."/>
            <person name="Hu P."/>
            <person name="Hua A."/>
            <person name="Kenton S."/>
            <person name="Lai H."/>
            <person name="Lao H.I."/>
            <person name="Lewis J."/>
            <person name="Lewis S."/>
            <person name="Lin S.-P."/>
            <person name="Loh P."/>
            <person name="Malaj E."/>
            <person name="Nguyen T."/>
            <person name="Pan H."/>
            <person name="Phan S."/>
            <person name="Qi S."/>
            <person name="Qian Y."/>
            <person name="Ray L."/>
            <person name="Ren Q."/>
            <person name="Shaull S."/>
            <person name="Sloan D."/>
            <person name="Song L."/>
            <person name="Wang Q."/>
            <person name="Wang Y."/>
            <person name="Wang Z."/>
            <person name="White J."/>
            <person name="Willingham D."/>
            <person name="Wu H."/>
            <person name="Yao Z."/>
            <person name="Zhan M."/>
            <person name="Zhang G."/>
            <person name="Chissoe S."/>
            <person name="Murray J."/>
            <person name="Miller N."/>
            <person name="Minx P."/>
            <person name="Fulton R."/>
            <person name="Johnson D."/>
            <person name="Bemis G."/>
            <person name="Bentley D."/>
            <person name="Bradshaw H."/>
            <person name="Bourne S."/>
            <person name="Cordes M."/>
            <person name="Du Z."/>
            <person name="Fulton L."/>
            <person name="Goela D."/>
            <person name="Graves T."/>
            <person name="Hawkins J."/>
            <person name="Hinds K."/>
            <person name="Kemp K."/>
            <person name="Latreille P."/>
            <person name="Layman D."/>
            <person name="Ozersky P."/>
            <person name="Rohlfing T."/>
            <person name="Scheet P."/>
            <person name="Walker C."/>
            <person name="Wamsley A."/>
            <person name="Wohldmann P."/>
            <person name="Pepin K."/>
            <person name="Nelson J."/>
            <person name="Korf I."/>
            <person name="Bedell J.A."/>
            <person name="Hillier L.W."/>
            <person name="Mardis E."/>
            <person name="Waterston R."/>
            <person name="Wilson R."/>
            <person name="Emanuel B.S."/>
            <person name="Shaikh T."/>
            <person name="Kurahashi H."/>
            <person name="Saitta S."/>
            <person name="Budarf M.L."/>
            <person name="McDermid H.E."/>
            <person name="Johnson A."/>
            <person name="Wong A.C.C."/>
            <person name="Morrow B.E."/>
            <person name="Edelmann L."/>
            <person name="Kim U.J."/>
            <person name="Shizuya H."/>
            <person name="Simon M.I."/>
            <person name="Dumanski J.P."/>
            <person name="Peyrard M."/>
            <person name="Kedra D."/>
            <person name="Seroussi E."/>
            <person name="Fransson I."/>
            <person name="Tapia I."/>
            <person name="Bruder C.E."/>
            <person name="O'Brien K.P."/>
            <person name="Wilkinson P."/>
            <person name="Bodenteich A."/>
            <person name="Hartman K."/>
            <person name="Hu X."/>
            <person name="Khan A.S."/>
            <person name="Lane L."/>
            <person name="Tilahun Y."/>
            <person name="Wright H."/>
        </authorList>
    </citation>
    <scope>NUCLEOTIDE SEQUENCE [LARGE SCALE GENOMIC DNA]</scope>
</reference>
<reference key="4">
    <citation type="submission" date="2005-07" db="EMBL/GenBank/DDBJ databases">
        <authorList>
            <person name="Mural R.J."/>
            <person name="Istrail S."/>
            <person name="Sutton G.G."/>
            <person name="Florea L."/>
            <person name="Halpern A.L."/>
            <person name="Mobarry C.M."/>
            <person name="Lippert R."/>
            <person name="Walenz B."/>
            <person name="Shatkay H."/>
            <person name="Dew I."/>
            <person name="Miller J.R."/>
            <person name="Flanigan M.J."/>
            <person name="Edwards N.J."/>
            <person name="Bolanos R."/>
            <person name="Fasulo D."/>
            <person name="Halldorsson B.V."/>
            <person name="Hannenhalli S."/>
            <person name="Turner R."/>
            <person name="Yooseph S."/>
            <person name="Lu F."/>
            <person name="Nusskern D.R."/>
            <person name="Shue B.C."/>
            <person name="Zheng X.H."/>
            <person name="Zhong F."/>
            <person name="Delcher A.L."/>
            <person name="Huson D.H."/>
            <person name="Kravitz S.A."/>
            <person name="Mouchard L."/>
            <person name="Reinert K."/>
            <person name="Remington K.A."/>
            <person name="Clark A.G."/>
            <person name="Waterman M.S."/>
            <person name="Eichler E.E."/>
            <person name="Adams M.D."/>
            <person name="Hunkapiller M.W."/>
            <person name="Myers E.W."/>
            <person name="Venter J.C."/>
        </authorList>
    </citation>
    <scope>NUCLEOTIDE SEQUENCE [LARGE SCALE GENOMIC DNA]</scope>
</reference>
<reference key="5">
    <citation type="journal article" date="2004" name="Genome Res.">
        <title>The status, quality, and expansion of the NIH full-length cDNA project: the Mammalian Gene Collection (MGC).</title>
        <authorList>
            <consortium name="The MGC Project Team"/>
        </authorList>
    </citation>
    <scope>NUCLEOTIDE SEQUENCE [LARGE SCALE MRNA] (ISOFORMS 1; 3 AND 4)</scope>
    <source>
        <tissue>Brain</tissue>
        <tissue>Lung</tissue>
        <tissue>Muscle</tissue>
        <tissue>Skin</tissue>
    </source>
</reference>
<reference key="6">
    <citation type="journal article" date="2003" name="Cell">
        <title>Differential contributions of condensin I and condensin II to mitotic chromosome architecture in vertebrate cells.</title>
        <authorList>
            <person name="Ono T."/>
            <person name="Losada A."/>
            <person name="Hirano M."/>
            <person name="Myers M.P."/>
            <person name="Neuwald A.F."/>
            <person name="Hirano T."/>
        </authorList>
    </citation>
    <scope>IDENTIFICATION IN CONDENSIN-2 COMPLEX WITH SMC2; SMC4; NCAPG2; NCAPH2 AND NCAPD3</scope>
    <scope>FUNCTION OF THE COMPLEX</scope>
    <scope>SUBCELLULAR LOCATION</scope>
</reference>
<reference key="7">
    <citation type="journal article" date="2006" name="Cell">
        <title>Global, in vivo, and site-specific phosphorylation dynamics in signaling networks.</title>
        <authorList>
            <person name="Olsen J.V."/>
            <person name="Blagoev B."/>
            <person name="Gnad F."/>
            <person name="Macek B."/>
            <person name="Kumar C."/>
            <person name="Mortensen P."/>
            <person name="Mann M."/>
        </authorList>
    </citation>
    <scope>IDENTIFICATION BY MASS SPECTROMETRY [LARGE SCALE ANALYSIS]</scope>
    <source>
        <tissue>Cervix carcinoma</tissue>
    </source>
</reference>
<reference key="8">
    <citation type="journal article" date="2007" name="Science">
        <title>ATM and ATR substrate analysis reveals extensive protein networks responsive to DNA damage.</title>
        <authorList>
            <person name="Matsuoka S."/>
            <person name="Ballif B.A."/>
            <person name="Smogorzewska A."/>
            <person name="McDonald E.R. III"/>
            <person name="Hurov K.E."/>
            <person name="Luo J."/>
            <person name="Bakalarski C.E."/>
            <person name="Zhao Z."/>
            <person name="Solimini N."/>
            <person name="Lerenthal Y."/>
            <person name="Shiloh Y."/>
            <person name="Gygi S.P."/>
            <person name="Elledge S.J."/>
        </authorList>
    </citation>
    <scope>PHOSPHORYLATION [LARGE SCALE ANALYSIS] AT SER-492</scope>
    <scope>IDENTIFICATION BY MASS SPECTROMETRY [LARGE SCALE ANALYSIS]</scope>
    <source>
        <tissue>Embryonic kidney</tissue>
    </source>
</reference>
<reference key="9">
    <citation type="journal article" date="2008" name="Mol. Cell">
        <title>Kinase-selective enrichment enables quantitative phosphoproteomics of the kinome across the cell cycle.</title>
        <authorList>
            <person name="Daub H."/>
            <person name="Olsen J.V."/>
            <person name="Bairlein M."/>
            <person name="Gnad F."/>
            <person name="Oppermann F.S."/>
            <person name="Korner R."/>
            <person name="Greff Z."/>
            <person name="Keri G."/>
            <person name="Stemmann O."/>
            <person name="Mann M."/>
        </authorList>
    </citation>
    <scope>PHOSPHORYLATION [LARGE SCALE ANALYSIS] AT SER-284 AND SER-492</scope>
    <scope>IDENTIFICATION BY MASS SPECTROMETRY [LARGE SCALE ANALYSIS]</scope>
    <source>
        <tissue>Cervix carcinoma</tissue>
    </source>
</reference>
<reference key="10">
    <citation type="journal article" date="2008" name="Proc. Natl. Acad. Sci. U.S.A.">
        <title>A quantitative atlas of mitotic phosphorylation.</title>
        <authorList>
            <person name="Dephoure N."/>
            <person name="Zhou C."/>
            <person name="Villen J."/>
            <person name="Beausoleil S.A."/>
            <person name="Bakalarski C.E."/>
            <person name="Elledge S.J."/>
            <person name="Gygi S.P."/>
        </authorList>
    </citation>
    <scope>PHOSPHORYLATION [LARGE SCALE ANALYSIS] AT SER-282 AND SER-492</scope>
    <scope>IDENTIFICATION BY MASS SPECTROMETRY [LARGE SCALE ANALYSIS]</scope>
    <source>
        <tissue>Cervix carcinoma</tissue>
    </source>
</reference>
<reference key="11">
    <citation type="journal article" date="2009" name="Anal. Chem.">
        <title>Lys-N and trypsin cover complementary parts of the phosphoproteome in a refined SCX-based approach.</title>
        <authorList>
            <person name="Gauci S."/>
            <person name="Helbig A.O."/>
            <person name="Slijper M."/>
            <person name="Krijgsveld J."/>
            <person name="Heck A.J."/>
            <person name="Mohammed S."/>
        </authorList>
    </citation>
    <scope>IDENTIFICATION BY MASS SPECTROMETRY [LARGE SCALE ANALYSIS]</scope>
</reference>
<reference key="12">
    <citation type="journal article" date="2009" name="Sci. Signal.">
        <title>Quantitative phosphoproteomic analysis of T cell receptor signaling reveals system-wide modulation of protein-protein interactions.</title>
        <authorList>
            <person name="Mayya V."/>
            <person name="Lundgren D.H."/>
            <person name="Hwang S.-I."/>
            <person name="Rezaul K."/>
            <person name="Wu L."/>
            <person name="Eng J.K."/>
            <person name="Rodionov V."/>
            <person name="Han D.K."/>
        </authorList>
    </citation>
    <scope>PHOSPHORYLATION [LARGE SCALE ANALYSIS] AT SER-208</scope>
    <scope>IDENTIFICATION BY MASS SPECTROMETRY [LARGE SCALE ANALYSIS]</scope>
    <source>
        <tissue>Leukemic T-cell</tissue>
    </source>
</reference>
<reference key="13">
    <citation type="journal article" date="2010" name="Sci. Signal.">
        <title>Quantitative phosphoproteomics reveals widespread full phosphorylation site occupancy during mitosis.</title>
        <authorList>
            <person name="Olsen J.V."/>
            <person name="Vermeulen M."/>
            <person name="Santamaria A."/>
            <person name="Kumar C."/>
            <person name="Miller M.L."/>
            <person name="Jensen L.J."/>
            <person name="Gnad F."/>
            <person name="Cox J."/>
            <person name="Jensen T.S."/>
            <person name="Nigg E.A."/>
            <person name="Brunak S."/>
            <person name="Mann M."/>
        </authorList>
    </citation>
    <scope>PHOSPHORYLATION [LARGE SCALE ANALYSIS] AT THR-19; SER-95; SER-200; SER-208; SER-284; SER-466 AND SER-492</scope>
    <scope>IDENTIFICATION BY MASS SPECTROMETRY [LARGE SCALE ANALYSIS]</scope>
    <source>
        <tissue>Cervix carcinoma</tissue>
    </source>
</reference>
<reference key="14">
    <citation type="journal article" date="2011" name="BMC Syst. Biol.">
        <title>Initial characterization of the human central proteome.</title>
        <authorList>
            <person name="Burkard T.R."/>
            <person name="Planyavsky M."/>
            <person name="Kaupe I."/>
            <person name="Breitwieser F.P."/>
            <person name="Buerckstuemmer T."/>
            <person name="Bennett K.L."/>
            <person name="Superti-Furga G."/>
            <person name="Colinge J."/>
        </authorList>
    </citation>
    <scope>IDENTIFICATION BY MASS SPECTROMETRY [LARGE SCALE ANALYSIS]</scope>
</reference>
<reference key="15">
    <citation type="journal article" date="2013" name="J. Proteome Res.">
        <title>Toward a comprehensive characterization of a human cancer cell phosphoproteome.</title>
        <authorList>
            <person name="Zhou H."/>
            <person name="Di Palma S."/>
            <person name="Preisinger C."/>
            <person name="Peng M."/>
            <person name="Polat A.N."/>
            <person name="Heck A.J."/>
            <person name="Mohammed S."/>
        </authorList>
    </citation>
    <scope>PHOSPHORYLATION [LARGE SCALE ANALYSIS] AT SER-284 AND SER-492</scope>
    <scope>IDENTIFICATION BY MASS SPECTROMETRY [LARGE SCALE ANALYSIS]</scope>
    <source>
        <tissue>Cervix carcinoma</tissue>
        <tissue>Erythroleukemia</tissue>
    </source>
</reference>
<comment type="function">
    <text evidence="2 4">Regulatory subunit of the condensin-2 complex, a complex that seems to provide chromosomes with an additional level of organization and rigidity and in establishing mitotic chromosome architecture (PubMed:14532007). May promote the resolution of double-strand DNA catenanes (intertwines) between sister chromatids. Condensin-mediated compaction likely increases tension in catenated sister chromatids, providing directionality for type II topoisomerase-mediated strand exchanges toward chromatid decatenation. Required for decatenation of chromatin bridges at anaphase. Early in neurogenesis, may play an essential role to ensure accurate mitotic chromosome condensation in neuron stem cells, ultimately affecting neuron pool and cortex size (By similarity). Seems to have lineage-specific role in T-cell development (PubMed:14532007).</text>
</comment>
<comment type="subunit">
    <text evidence="4">Component of the condensin-2 complex, which contains the SMC2 and SMC4 heterodimer, and three non SMC subunits, NCAPG2, NCAPH2 and NCAPD3 that probably regulate the complex.</text>
</comment>
<comment type="interaction">
    <interactant intactId="EBI-2548296">
        <id>Q6IBW4</id>
    </interactant>
    <interactant intactId="EBI-722805">
        <id>P42695</id>
        <label>NCAPD3</label>
    </interactant>
    <organismsDiffer>false</organismsDiffer>
    <experiments>6</experiments>
</comment>
<comment type="interaction">
    <interactant intactId="EBI-2548296">
        <id>Q6IBW4</id>
    </interactant>
    <interactant intactId="EBI-1047404">
        <id>Q86XI2</id>
        <label>NCAPG2</label>
    </interactant>
    <organismsDiffer>false</organismsDiffer>
    <experiments>5</experiments>
</comment>
<comment type="interaction">
    <interactant intactId="EBI-2548296">
        <id>Q6IBW4</id>
    </interactant>
    <interactant intactId="EBI-1567797">
        <id>Q8WWY3</id>
        <label>PRPF31</label>
    </interactant>
    <organismsDiffer>false</organismsDiffer>
    <experiments>3</experiments>
</comment>
<comment type="interaction">
    <interactant intactId="EBI-2548296">
        <id>Q6IBW4</id>
    </interactant>
    <interactant intactId="EBI-355822">
        <id>O95347</id>
        <label>SMC2</label>
    </interactant>
    <organismsDiffer>false</organismsDiffer>
    <experiments>6</experiments>
</comment>
<comment type="interaction">
    <interactant intactId="EBI-2548296">
        <id>Q6IBW4</id>
    </interactant>
    <interactant intactId="EBI-356173">
        <id>Q9NTJ3</id>
        <label>SMC4</label>
    </interactant>
    <organismsDiffer>false</organismsDiffer>
    <experiments>5</experiments>
</comment>
<comment type="interaction">
    <interactant intactId="EBI-10247000">
        <id>Q6IBW4-4</id>
    </interactant>
    <interactant intactId="EBI-12109402">
        <id>Q86W74-2</id>
        <label>ANKRD46</label>
    </interactant>
    <organismsDiffer>false</organismsDiffer>
    <experiments>3</experiments>
</comment>
<comment type="interaction">
    <interactant intactId="EBI-10247000">
        <id>Q6IBW4-4</id>
    </interactant>
    <interactant intactId="EBI-715495">
        <id>P05090</id>
        <label>APOD</label>
    </interactant>
    <organismsDiffer>false</organismsDiffer>
    <experiments>3</experiments>
</comment>
<comment type="interaction">
    <interactant intactId="EBI-10247000">
        <id>Q6IBW4-4</id>
    </interactant>
    <interactant intactId="EBI-12003442">
        <id>Q8WVX3-2</id>
        <label>C4orf3</label>
    </interactant>
    <organismsDiffer>false</organismsDiffer>
    <experiments>3</experiments>
</comment>
<comment type="interaction">
    <interactant intactId="EBI-10247000">
        <id>Q6IBW4-4</id>
    </interactant>
    <interactant intactId="EBI-12019274">
        <id>Q4LDR2</id>
        <label>CTXN3</label>
    </interactant>
    <organismsDiffer>false</organismsDiffer>
    <experiments>3</experiments>
</comment>
<comment type="interaction">
    <interactant intactId="EBI-10247000">
        <id>Q6IBW4-4</id>
    </interactant>
    <interactant intactId="EBI-1175354">
        <id>Q9H6Z9</id>
        <label>EGLN3</label>
    </interactant>
    <organismsDiffer>false</organismsDiffer>
    <experiments>3</experiments>
</comment>
<comment type="interaction">
    <interactant intactId="EBI-10247000">
        <id>Q6IBW4-4</id>
    </interactant>
    <interactant intactId="EBI-489887">
        <id>P50402</id>
        <label>EMD</label>
    </interactant>
    <organismsDiffer>false</organismsDiffer>
    <experiments>3</experiments>
</comment>
<comment type="interaction">
    <interactant intactId="EBI-10247000">
        <id>Q6IBW4-4</id>
    </interactant>
    <interactant intactId="EBI-714550">
        <id>P37268</id>
        <label>FDFT1</label>
    </interactant>
    <organismsDiffer>false</organismsDiffer>
    <experiments>3</experiments>
</comment>
<comment type="interaction">
    <interactant intactId="EBI-10247000">
        <id>Q6IBW4-4</id>
    </interactant>
    <interactant intactId="EBI-720480">
        <id>P24593</id>
        <label>IGFBP5</label>
    </interactant>
    <organismsDiffer>false</organismsDiffer>
    <experiments>3</experiments>
</comment>
<comment type="interaction">
    <interactant intactId="EBI-10247000">
        <id>Q6IBW4-4</id>
    </interactant>
    <interactant intactId="EBI-3932027">
        <id>P21145</id>
        <label>MAL</label>
    </interactant>
    <organismsDiffer>false</organismsDiffer>
    <experiments>3</experiments>
</comment>
<comment type="interaction">
    <interactant intactId="EBI-10247000">
        <id>Q6IBW4-4</id>
    </interactant>
    <interactant intactId="EBI-10246938">
        <id>Q5TAL4</id>
        <label>SNRPC</label>
    </interactant>
    <organismsDiffer>false</organismsDiffer>
    <experiments>3</experiments>
</comment>
<comment type="interaction">
    <interactant intactId="EBI-10247000">
        <id>Q6IBW4-4</id>
    </interactant>
    <interactant intactId="EBI-10171534">
        <id>A0PK00</id>
        <label>TMEM120B</label>
    </interactant>
    <organismsDiffer>false</organismsDiffer>
    <experiments>3</experiments>
</comment>
<comment type="interaction">
    <interactant intactId="EBI-10247000">
        <id>Q6IBW4-4</id>
    </interactant>
    <interactant intactId="EBI-2339195">
        <id>Q9P0S9</id>
        <label>TMEM14C</label>
    </interactant>
    <organismsDiffer>false</organismsDiffer>
    <experiments>3</experiments>
</comment>
<comment type="interaction">
    <interactant intactId="EBI-10247000">
        <id>Q6IBW4-4</id>
    </interactant>
    <interactant intactId="EBI-12015604">
        <id>Q8N2M4</id>
        <label>TMEM86A</label>
    </interactant>
    <organismsDiffer>false</organismsDiffer>
    <experiments>3</experiments>
</comment>
<comment type="interaction">
    <interactant intactId="EBI-10247000">
        <id>Q6IBW4-4</id>
    </interactant>
    <interactant intactId="EBI-2819725">
        <id>Q9Y5Z9</id>
        <label>UBIAD1</label>
    </interactant>
    <organismsDiffer>false</organismsDiffer>
    <experiments>3</experiments>
</comment>
<comment type="interaction">
    <interactant intactId="EBI-10247000">
        <id>Q6IBW4-4</id>
    </interactant>
    <interactant intactId="EBI-739895">
        <id>Q8N6Y0</id>
        <label>USHBP1</label>
    </interactant>
    <organismsDiffer>false</organismsDiffer>
    <experiments>3</experiments>
</comment>
<comment type="interaction">
    <interactant intactId="EBI-10247000">
        <id>Q6IBW4-4</id>
    </interactant>
    <interactant intactId="EBI-10191195">
        <id>O95183</id>
        <label>VAMP5</label>
    </interactant>
    <organismsDiffer>false</organismsDiffer>
    <experiments>3</experiments>
</comment>
<comment type="subcellular location">
    <subcellularLocation>
        <location evidence="4">Nucleus</location>
    </subcellularLocation>
    <subcellularLocation>
        <location evidence="4">Chromosome</location>
    </subcellularLocation>
    <text>Distributed along the arms of chromosomes assembled in vivo and in vitro.</text>
</comment>
<comment type="alternative products">
    <event type="alternative splicing"/>
    <isoform>
        <id>Q6IBW4-1</id>
        <name>1</name>
        <sequence type="displayed"/>
    </isoform>
    <isoform>
        <id>Q6IBW4-2</id>
        <name>2</name>
        <sequence type="described" ref="VSP_032636"/>
    </isoform>
    <isoform>
        <id>Q6IBW4-5</id>
        <name>3</name>
        <sequence type="described" ref="VSP_032637 VSP_032638"/>
    </isoform>
    <isoform>
        <id>Q6IBW4-4</id>
        <name>4</name>
        <sequence type="described" ref="VSP_032639"/>
    </isoform>
</comment>
<comment type="similarity">
    <text evidence="6">Belongs to the CND2 H2 (condensin-2 subunit 2) family.</text>
</comment>
<comment type="sequence caution" evidence="6">
    <conflict type="erroneous gene model prediction">
        <sequence resource="EMBL-CDS" id="AAB03345"/>
    </conflict>
</comment>
<comment type="sequence caution" evidence="6">
    <conflict type="erroneous initiation">
        <sequence resource="EMBL-CDS" id="AAH00473"/>
    </conflict>
</comment>
<comment type="sequence caution" evidence="6">
    <conflict type="erroneous initiation">
        <sequence resource="EMBL-CDS" id="AAH01509"/>
    </conflict>
</comment>
<comment type="sequence caution" evidence="6">
    <conflict type="erroneous initiation">
        <sequence resource="EMBL-CDS" id="AAH01833"/>
    </conflict>
</comment>
<comment type="sequence caution" evidence="6">
    <conflict type="erroneous initiation">
        <sequence resource="EMBL-CDS" id="AAH01937"/>
    </conflict>
</comment>
<comment type="sequence caution" evidence="6">
    <conflict type="erroneous initiation">
        <sequence resource="EMBL-CDS" id="AAH09441"/>
    </conflict>
</comment>
<comment type="sequence caution" evidence="6">
    <conflict type="frameshift">
        <sequence resource="EMBL-CDS" id="CAA16670"/>
    </conflict>
</comment>
<comment type="sequence caution" evidence="6">
    <conflict type="erroneous gene model prediction">
        <sequence resource="EMBL-CDS" id="EAW73552"/>
    </conflict>
</comment>
<proteinExistence type="evidence at protein level"/>
<keyword id="KW-0025">Alternative splicing</keyword>
<keyword id="KW-0158">Chromosome</keyword>
<keyword id="KW-0226">DNA condensation</keyword>
<keyword id="KW-0539">Nucleus</keyword>
<keyword id="KW-0597">Phosphoprotein</keyword>
<keyword id="KW-1267">Proteomics identification</keyword>
<keyword id="KW-1185">Reference proteome</keyword>
<evidence type="ECO:0000250" key="1">
    <source>
        <dbReference type="UniProtKB" id="Q4V8I2"/>
    </source>
</evidence>
<evidence type="ECO:0000250" key="2">
    <source>
        <dbReference type="UniProtKB" id="Q8BSP2"/>
    </source>
</evidence>
<evidence type="ECO:0000256" key="3">
    <source>
        <dbReference type="SAM" id="MobiDB-lite"/>
    </source>
</evidence>
<evidence type="ECO:0000269" key="4">
    <source>
    </source>
</evidence>
<evidence type="ECO:0000303" key="5">
    <source>
    </source>
</evidence>
<evidence type="ECO:0000305" key="6"/>
<evidence type="ECO:0007744" key="7">
    <source>
    </source>
</evidence>
<evidence type="ECO:0007744" key="8">
    <source>
    </source>
</evidence>
<evidence type="ECO:0007744" key="9">
    <source>
    </source>
</evidence>
<evidence type="ECO:0007744" key="10">
    <source>
    </source>
</evidence>
<evidence type="ECO:0007744" key="11">
    <source>
    </source>
</evidence>
<evidence type="ECO:0007744" key="12">
    <source>
    </source>
</evidence>
<organism>
    <name type="scientific">Homo sapiens</name>
    <name type="common">Human</name>
    <dbReference type="NCBI Taxonomy" id="9606"/>
    <lineage>
        <taxon>Eukaryota</taxon>
        <taxon>Metazoa</taxon>
        <taxon>Chordata</taxon>
        <taxon>Craniata</taxon>
        <taxon>Vertebrata</taxon>
        <taxon>Euteleostomi</taxon>
        <taxon>Mammalia</taxon>
        <taxon>Eutheria</taxon>
        <taxon>Euarchontoglires</taxon>
        <taxon>Primates</taxon>
        <taxon>Haplorrhini</taxon>
        <taxon>Catarrhini</taxon>
        <taxon>Hominidae</taxon>
        <taxon>Homo</taxon>
    </lineage>
</organism>